<reference key="1">
    <citation type="journal article" date="2007" name="Genome Res.">
        <title>Lateral gene transfer between obligate intracellular bacteria: evidence from the Rickettsia massiliae genome.</title>
        <authorList>
            <person name="Blanc G."/>
            <person name="Ogata H."/>
            <person name="Robert C."/>
            <person name="Audic S."/>
            <person name="Claverie J.-M."/>
            <person name="Raoult D."/>
        </authorList>
    </citation>
    <scope>NUCLEOTIDE SEQUENCE [LARGE SCALE GENOMIC DNA]</scope>
    <source>
        <strain>Mtu5</strain>
    </source>
</reference>
<sequence>MLSILKKLFGTANDRTVKKLFSEITKINSLEPAIQKLSDEELKNKTVEFKEKLKNGATLDDIVYEAFAVVREAARRVCGMRHFDVQLIGGLILHRGMITEMRTGEGKTLVATLPAYLNALTGKGVHVVTVNDYLASRDSASMGKIYNFLGLSVGCIVGGMPDEIKRAAYNADITHATNNELGFDYLRDNMKYSLQERVLRPFNFAIIDEVDSILIDEARTPLVISGPVNDNSELYGKIDKIVRLLNASDFEKDEKLKTINLTETGITHIESLLSKENIIKPDTGLYDFENLTLVHYVNQALRAHNMFTVNVDYLVREGKVMIIDEFTGRVMEGRRYSEGLHQALEAKENVKIQNENQTLASITFQNYFRNYPKLSGMTGTAMTEAPELKDIYNLDVVAVPTHNKVTRLDLDDEIYGSKKEKYDAILKLIKDCYDRGQPILVGTISIEKSEELSSVLNKEKIPHKVLNAKFHEQEAFIIAQAGRFKAVTIATNMAGRGTDIMLGGNPEMLIEQLDKEHNYEAKIAEIKAQIAEEKKQVIEAGGLFVIGTERHESRRIDNQLRGRSGRQGDPGKTKFFLSLDDDLMRIFASDRISGVLRTLGLKDGEAIHHPMISRSLEKAQQKVEGHNYEMRKNLLRFDDVMNDQRKIIYEQRTEIIKSKDSHGFLNSTTEELAKKIVLTFMPVGSYREDWDIENLSVELHRVFSIKFDHNVVSKNDVTEEEITKTVIQMAHDIYKSKEEAYSSELMHNAVKYILLTTLDQVWKDHLYSLDHLRQGISLRAYAQKDPLSEYKREAFNLFEQMLNNLKELFIQTVYHFHIDLKHVQKEDVSLEYKKLQQNMRESREDPAFSKYNAGSSLETDLKPVVSRIDPKDRNPDDPTSWGRVSRNELCPCGSGKKYKYCHGAHE</sequence>
<keyword id="KW-0067">ATP-binding</keyword>
<keyword id="KW-0997">Cell inner membrane</keyword>
<keyword id="KW-1003">Cell membrane</keyword>
<keyword id="KW-0963">Cytoplasm</keyword>
<keyword id="KW-0472">Membrane</keyword>
<keyword id="KW-0479">Metal-binding</keyword>
<keyword id="KW-0547">Nucleotide-binding</keyword>
<keyword id="KW-0653">Protein transport</keyword>
<keyword id="KW-1278">Translocase</keyword>
<keyword id="KW-0811">Translocation</keyword>
<keyword id="KW-0813">Transport</keyword>
<keyword id="KW-0862">Zinc</keyword>
<feature type="chain" id="PRO_0000320977" description="Protein translocase subunit SecA">
    <location>
        <begin position="1"/>
        <end position="906"/>
    </location>
</feature>
<feature type="region of interest" description="Disordered" evidence="2">
    <location>
        <begin position="862"/>
        <end position="885"/>
    </location>
</feature>
<feature type="binding site" evidence="1">
    <location>
        <position position="86"/>
    </location>
    <ligand>
        <name>ATP</name>
        <dbReference type="ChEBI" id="CHEBI:30616"/>
    </ligand>
</feature>
<feature type="binding site" evidence="1">
    <location>
        <begin position="104"/>
        <end position="108"/>
    </location>
    <ligand>
        <name>ATP</name>
        <dbReference type="ChEBI" id="CHEBI:30616"/>
    </ligand>
</feature>
<feature type="binding site" evidence="1">
    <location>
        <position position="499"/>
    </location>
    <ligand>
        <name>ATP</name>
        <dbReference type="ChEBI" id="CHEBI:30616"/>
    </ligand>
</feature>
<feature type="binding site" evidence="1">
    <location>
        <position position="890"/>
    </location>
    <ligand>
        <name>Zn(2+)</name>
        <dbReference type="ChEBI" id="CHEBI:29105"/>
    </ligand>
</feature>
<feature type="binding site" evidence="1">
    <location>
        <position position="892"/>
    </location>
    <ligand>
        <name>Zn(2+)</name>
        <dbReference type="ChEBI" id="CHEBI:29105"/>
    </ligand>
</feature>
<feature type="binding site" evidence="1">
    <location>
        <position position="901"/>
    </location>
    <ligand>
        <name>Zn(2+)</name>
        <dbReference type="ChEBI" id="CHEBI:29105"/>
    </ligand>
</feature>
<feature type="binding site" evidence="1">
    <location>
        <position position="902"/>
    </location>
    <ligand>
        <name>Zn(2+)</name>
        <dbReference type="ChEBI" id="CHEBI:29105"/>
    </ligand>
</feature>
<protein>
    <recommendedName>
        <fullName evidence="1">Protein translocase subunit SecA</fullName>
        <ecNumber evidence="1">7.4.2.8</ecNumber>
    </recommendedName>
</protein>
<proteinExistence type="inferred from homology"/>
<name>SECA_RICM5</name>
<gene>
    <name evidence="1" type="primary">secA</name>
    <name type="ordered locus">RMA_0912</name>
</gene>
<organism>
    <name type="scientific">Rickettsia massiliae (strain Mtu5)</name>
    <dbReference type="NCBI Taxonomy" id="416276"/>
    <lineage>
        <taxon>Bacteria</taxon>
        <taxon>Pseudomonadati</taxon>
        <taxon>Pseudomonadota</taxon>
        <taxon>Alphaproteobacteria</taxon>
        <taxon>Rickettsiales</taxon>
        <taxon>Rickettsiaceae</taxon>
        <taxon>Rickettsieae</taxon>
        <taxon>Rickettsia</taxon>
        <taxon>spotted fever group</taxon>
    </lineage>
</organism>
<comment type="function">
    <text evidence="1">Part of the Sec protein translocase complex. Interacts with the SecYEG preprotein conducting channel. Has a central role in coupling the hydrolysis of ATP to the transfer of proteins into and across the cell membrane, serving both as a receptor for the preprotein-SecB complex and as an ATP-driven molecular motor driving the stepwise translocation of polypeptide chains across the membrane.</text>
</comment>
<comment type="catalytic activity">
    <reaction evidence="1">
        <text>ATP + H2O + cellular proteinSide 1 = ADP + phosphate + cellular proteinSide 2.</text>
        <dbReference type="EC" id="7.4.2.8"/>
    </reaction>
</comment>
<comment type="cofactor">
    <cofactor evidence="1">
        <name>Zn(2+)</name>
        <dbReference type="ChEBI" id="CHEBI:29105"/>
    </cofactor>
    <text evidence="1">May bind 1 zinc ion per subunit.</text>
</comment>
<comment type="subunit">
    <text evidence="1">Monomer and homodimer. Part of the essential Sec protein translocation apparatus which comprises SecA, SecYEG and auxiliary proteins SecDF-YajC and YidC.</text>
</comment>
<comment type="subcellular location">
    <subcellularLocation>
        <location evidence="1">Cell inner membrane</location>
        <topology evidence="1">Peripheral membrane protein</topology>
        <orientation evidence="1">Cytoplasmic side</orientation>
    </subcellularLocation>
    <subcellularLocation>
        <location evidence="1">Cytoplasm</location>
    </subcellularLocation>
    <text evidence="1">Distribution is 50-50.</text>
</comment>
<comment type="similarity">
    <text evidence="1">Belongs to the SecA family.</text>
</comment>
<comment type="sequence caution" evidence="3">
    <conflict type="erroneous initiation">
        <sequence resource="EMBL-CDS" id="ABV84991"/>
    </conflict>
    <text>Extended N-terminus.</text>
</comment>
<accession>A8F255</accession>
<dbReference type="EC" id="7.4.2.8" evidence="1"/>
<dbReference type="EMBL" id="CP000683">
    <property type="protein sequence ID" value="ABV84991.1"/>
    <property type="status" value="ALT_INIT"/>
    <property type="molecule type" value="Genomic_DNA"/>
</dbReference>
<dbReference type="RefSeq" id="WP_041404781.1">
    <property type="nucleotide sequence ID" value="NC_009900.1"/>
</dbReference>
<dbReference type="SMR" id="A8F255"/>
<dbReference type="KEGG" id="rms:RMA_0912"/>
<dbReference type="HOGENOM" id="CLU_005314_3_0_5"/>
<dbReference type="Proteomes" id="UP000001311">
    <property type="component" value="Chromosome"/>
</dbReference>
<dbReference type="GO" id="GO:0031522">
    <property type="term" value="C:cell envelope Sec protein transport complex"/>
    <property type="evidence" value="ECO:0007669"/>
    <property type="project" value="TreeGrafter"/>
</dbReference>
<dbReference type="GO" id="GO:0005829">
    <property type="term" value="C:cytosol"/>
    <property type="evidence" value="ECO:0007669"/>
    <property type="project" value="TreeGrafter"/>
</dbReference>
<dbReference type="GO" id="GO:0005886">
    <property type="term" value="C:plasma membrane"/>
    <property type="evidence" value="ECO:0007669"/>
    <property type="project" value="UniProtKB-SubCell"/>
</dbReference>
<dbReference type="GO" id="GO:0005524">
    <property type="term" value="F:ATP binding"/>
    <property type="evidence" value="ECO:0007669"/>
    <property type="project" value="UniProtKB-UniRule"/>
</dbReference>
<dbReference type="GO" id="GO:0046872">
    <property type="term" value="F:metal ion binding"/>
    <property type="evidence" value="ECO:0007669"/>
    <property type="project" value="UniProtKB-KW"/>
</dbReference>
<dbReference type="GO" id="GO:0008564">
    <property type="term" value="F:protein-exporting ATPase activity"/>
    <property type="evidence" value="ECO:0007669"/>
    <property type="project" value="UniProtKB-EC"/>
</dbReference>
<dbReference type="GO" id="GO:0065002">
    <property type="term" value="P:intracellular protein transmembrane transport"/>
    <property type="evidence" value="ECO:0007669"/>
    <property type="project" value="UniProtKB-UniRule"/>
</dbReference>
<dbReference type="GO" id="GO:0017038">
    <property type="term" value="P:protein import"/>
    <property type="evidence" value="ECO:0007669"/>
    <property type="project" value="InterPro"/>
</dbReference>
<dbReference type="GO" id="GO:0006605">
    <property type="term" value="P:protein targeting"/>
    <property type="evidence" value="ECO:0007669"/>
    <property type="project" value="UniProtKB-UniRule"/>
</dbReference>
<dbReference type="GO" id="GO:0043952">
    <property type="term" value="P:protein transport by the Sec complex"/>
    <property type="evidence" value="ECO:0007669"/>
    <property type="project" value="TreeGrafter"/>
</dbReference>
<dbReference type="CDD" id="cd17928">
    <property type="entry name" value="DEXDc_SecA"/>
    <property type="match status" value="1"/>
</dbReference>
<dbReference type="CDD" id="cd18803">
    <property type="entry name" value="SF2_C_secA"/>
    <property type="match status" value="1"/>
</dbReference>
<dbReference type="FunFam" id="3.40.50.300:FF:000113">
    <property type="entry name" value="Preprotein translocase subunit SecA"/>
    <property type="match status" value="1"/>
</dbReference>
<dbReference type="FunFam" id="3.90.1440.10:FF:000001">
    <property type="entry name" value="Preprotein translocase subunit SecA"/>
    <property type="match status" value="1"/>
</dbReference>
<dbReference type="FunFam" id="1.10.3060.10:FF:000003">
    <property type="entry name" value="Protein translocase subunit SecA"/>
    <property type="match status" value="1"/>
</dbReference>
<dbReference type="FunFam" id="3.40.50.300:FF:000334">
    <property type="entry name" value="Protein translocase subunit SecA"/>
    <property type="match status" value="1"/>
</dbReference>
<dbReference type="Gene3D" id="1.10.3060.10">
    <property type="entry name" value="Helical scaffold and wing domains of SecA"/>
    <property type="match status" value="1"/>
</dbReference>
<dbReference type="Gene3D" id="3.40.50.300">
    <property type="entry name" value="P-loop containing nucleotide triphosphate hydrolases"/>
    <property type="match status" value="2"/>
</dbReference>
<dbReference type="Gene3D" id="3.90.1440.10">
    <property type="entry name" value="SecA, preprotein cross-linking domain"/>
    <property type="match status" value="1"/>
</dbReference>
<dbReference type="HAMAP" id="MF_01382">
    <property type="entry name" value="SecA"/>
    <property type="match status" value="1"/>
</dbReference>
<dbReference type="InterPro" id="IPR014001">
    <property type="entry name" value="Helicase_ATP-bd"/>
</dbReference>
<dbReference type="InterPro" id="IPR027417">
    <property type="entry name" value="P-loop_NTPase"/>
</dbReference>
<dbReference type="InterPro" id="IPR004027">
    <property type="entry name" value="SEC_C_motif"/>
</dbReference>
<dbReference type="InterPro" id="IPR000185">
    <property type="entry name" value="SecA"/>
</dbReference>
<dbReference type="InterPro" id="IPR020937">
    <property type="entry name" value="SecA_CS"/>
</dbReference>
<dbReference type="InterPro" id="IPR011115">
    <property type="entry name" value="SecA_DEAD"/>
</dbReference>
<dbReference type="InterPro" id="IPR014018">
    <property type="entry name" value="SecA_motor_DEAD"/>
</dbReference>
<dbReference type="InterPro" id="IPR011130">
    <property type="entry name" value="SecA_preprotein_X-link_dom"/>
</dbReference>
<dbReference type="InterPro" id="IPR044722">
    <property type="entry name" value="SecA_SF2_C"/>
</dbReference>
<dbReference type="InterPro" id="IPR011116">
    <property type="entry name" value="SecA_Wing/Scaffold"/>
</dbReference>
<dbReference type="InterPro" id="IPR036266">
    <property type="entry name" value="SecA_Wing/Scaffold_sf"/>
</dbReference>
<dbReference type="InterPro" id="IPR036670">
    <property type="entry name" value="SecA_X-link_sf"/>
</dbReference>
<dbReference type="NCBIfam" id="NF009538">
    <property type="entry name" value="PRK12904.1"/>
    <property type="match status" value="1"/>
</dbReference>
<dbReference type="NCBIfam" id="TIGR00963">
    <property type="entry name" value="secA"/>
    <property type="match status" value="1"/>
</dbReference>
<dbReference type="PANTHER" id="PTHR30612:SF0">
    <property type="entry name" value="CHLOROPLAST PROTEIN-TRANSPORTING ATPASE"/>
    <property type="match status" value="1"/>
</dbReference>
<dbReference type="PANTHER" id="PTHR30612">
    <property type="entry name" value="SECA INNER MEMBRANE COMPONENT OF SEC PROTEIN SECRETION SYSTEM"/>
    <property type="match status" value="1"/>
</dbReference>
<dbReference type="Pfam" id="PF21090">
    <property type="entry name" value="P-loop_SecA"/>
    <property type="match status" value="1"/>
</dbReference>
<dbReference type="Pfam" id="PF02810">
    <property type="entry name" value="SEC-C"/>
    <property type="match status" value="1"/>
</dbReference>
<dbReference type="Pfam" id="PF07517">
    <property type="entry name" value="SecA_DEAD"/>
    <property type="match status" value="1"/>
</dbReference>
<dbReference type="Pfam" id="PF01043">
    <property type="entry name" value="SecA_PP_bind"/>
    <property type="match status" value="1"/>
</dbReference>
<dbReference type="Pfam" id="PF07516">
    <property type="entry name" value="SecA_SW"/>
    <property type="match status" value="1"/>
</dbReference>
<dbReference type="PRINTS" id="PR00906">
    <property type="entry name" value="SECA"/>
</dbReference>
<dbReference type="SMART" id="SM00957">
    <property type="entry name" value="SecA_DEAD"/>
    <property type="match status" value="1"/>
</dbReference>
<dbReference type="SMART" id="SM00958">
    <property type="entry name" value="SecA_PP_bind"/>
    <property type="match status" value="1"/>
</dbReference>
<dbReference type="SUPFAM" id="SSF81886">
    <property type="entry name" value="Helical scaffold and wing domains of SecA"/>
    <property type="match status" value="1"/>
</dbReference>
<dbReference type="SUPFAM" id="SSF52540">
    <property type="entry name" value="P-loop containing nucleoside triphosphate hydrolases"/>
    <property type="match status" value="2"/>
</dbReference>
<dbReference type="SUPFAM" id="SSF81767">
    <property type="entry name" value="Pre-protein crosslinking domain of SecA"/>
    <property type="match status" value="1"/>
</dbReference>
<dbReference type="PROSITE" id="PS01312">
    <property type="entry name" value="SECA"/>
    <property type="match status" value="1"/>
</dbReference>
<dbReference type="PROSITE" id="PS51196">
    <property type="entry name" value="SECA_MOTOR_DEAD"/>
    <property type="match status" value="1"/>
</dbReference>
<evidence type="ECO:0000255" key="1">
    <source>
        <dbReference type="HAMAP-Rule" id="MF_01382"/>
    </source>
</evidence>
<evidence type="ECO:0000256" key="2">
    <source>
        <dbReference type="SAM" id="MobiDB-lite"/>
    </source>
</evidence>
<evidence type="ECO:0000305" key="3"/>